<protein>
    <recommendedName>
        <fullName evidence="1">Ribosomal RNA small subunit methyltransferase H</fullName>
        <ecNumber evidence="1">2.1.1.199</ecNumber>
    </recommendedName>
    <alternativeName>
        <fullName evidence="1">16S rRNA m(4)C1402 methyltransferase</fullName>
    </alternativeName>
    <alternativeName>
        <fullName evidence="1">rRNA (cytosine-N(4)-)-methyltransferase RsmH</fullName>
    </alternativeName>
</protein>
<reference key="1">
    <citation type="journal article" date="2007" name="Proc. Natl. Acad. Sci. U.S.A.">
        <title>Genome plasticity of BCG and impact on vaccine efficacy.</title>
        <authorList>
            <person name="Brosch R."/>
            <person name="Gordon S.V."/>
            <person name="Garnier T."/>
            <person name="Eiglmeier K."/>
            <person name="Frigui W."/>
            <person name="Valenti P."/>
            <person name="Dos Santos S."/>
            <person name="Duthoy S."/>
            <person name="Lacroix C."/>
            <person name="Garcia-Pelayo C."/>
            <person name="Inwald J.K."/>
            <person name="Golby P."/>
            <person name="Garcia J.N."/>
            <person name="Hewinson R.G."/>
            <person name="Behr M.A."/>
            <person name="Quail M.A."/>
            <person name="Churcher C."/>
            <person name="Barrell B.G."/>
            <person name="Parkhill J."/>
            <person name="Cole S.T."/>
        </authorList>
    </citation>
    <scope>NUCLEOTIDE SEQUENCE [LARGE SCALE GENOMIC DNA]</scope>
    <source>
        <strain>BCG / Pasteur 1173P2</strain>
    </source>
</reference>
<accession>A1KKK8</accession>
<gene>
    <name evidence="1" type="primary">rsmH</name>
    <name type="synonym">mraW</name>
    <name type="ordered locus">BCG_2182c</name>
</gene>
<comment type="function">
    <text evidence="1">Specifically methylates the N4 position of cytidine in position 1402 (C1402) of 16S rRNA.</text>
</comment>
<comment type="catalytic activity">
    <reaction evidence="1">
        <text>cytidine(1402) in 16S rRNA + S-adenosyl-L-methionine = N(4)-methylcytidine(1402) in 16S rRNA + S-adenosyl-L-homocysteine + H(+)</text>
        <dbReference type="Rhea" id="RHEA:42928"/>
        <dbReference type="Rhea" id="RHEA-COMP:10286"/>
        <dbReference type="Rhea" id="RHEA-COMP:10287"/>
        <dbReference type="ChEBI" id="CHEBI:15378"/>
        <dbReference type="ChEBI" id="CHEBI:57856"/>
        <dbReference type="ChEBI" id="CHEBI:59789"/>
        <dbReference type="ChEBI" id="CHEBI:74506"/>
        <dbReference type="ChEBI" id="CHEBI:82748"/>
        <dbReference type="EC" id="2.1.1.199"/>
    </reaction>
</comment>
<comment type="subcellular location">
    <subcellularLocation>
        <location evidence="1">Cytoplasm</location>
    </subcellularLocation>
</comment>
<comment type="similarity">
    <text evidence="1">Belongs to the methyltransferase superfamily. RsmH family.</text>
</comment>
<evidence type="ECO:0000255" key="1">
    <source>
        <dbReference type="HAMAP-Rule" id="MF_01007"/>
    </source>
</evidence>
<feature type="chain" id="PRO_0000386986" description="Ribosomal RNA small subunit methyltransferase H">
    <location>
        <begin position="1"/>
        <end position="396"/>
    </location>
</feature>
<feature type="binding site" evidence="1">
    <location>
        <begin position="101"/>
        <end position="103"/>
    </location>
    <ligand>
        <name>S-adenosyl-L-methionine</name>
        <dbReference type="ChEBI" id="CHEBI:59789"/>
    </ligand>
</feature>
<feature type="binding site" evidence="1">
    <location>
        <position position="120"/>
    </location>
    <ligand>
        <name>S-adenosyl-L-methionine</name>
        <dbReference type="ChEBI" id="CHEBI:59789"/>
    </ligand>
</feature>
<feature type="binding site" evidence="1">
    <location>
        <position position="147"/>
    </location>
    <ligand>
        <name>S-adenosyl-L-methionine</name>
        <dbReference type="ChEBI" id="CHEBI:59789"/>
    </ligand>
</feature>
<feature type="binding site" evidence="1">
    <location>
        <position position="171"/>
    </location>
    <ligand>
        <name>S-adenosyl-L-methionine</name>
        <dbReference type="ChEBI" id="CHEBI:59789"/>
    </ligand>
</feature>
<feature type="binding site" evidence="1">
    <location>
        <position position="178"/>
    </location>
    <ligand>
        <name>S-adenosyl-L-methionine</name>
        <dbReference type="ChEBI" id="CHEBI:59789"/>
    </ligand>
</feature>
<proteinExistence type="inferred from homology"/>
<sequence length="396" mass="42529">MQTRAPWSLPEATLAYFPNARFVSSDRDLGAGAAPGIAASRSTACQTWGGITVADPGSGPTGFGHVPVLAQRCFELLTPALTRYYPDGSQAVLLDATIGAGGHAERFLEGLPGLRLIGLDRDPTALDVARSRLVRFADRLTLVHTRYDCLGAALAESGYAAVGSVDGILFDLGVSSMQLDRAERGFAYATDAPLDMRMDPTTPLTAADIVNTYDEAALADILRRYGEERFARRIAAGIVRRRAKTPFTSTAELVALLYQAIPAPARRVGGHPAKRTFQALRIAVNDELESLRTAVPAALDALAIGGRIAVLAYQSLEDRIVKRVFAEAVASATPAGLPVELPGHEPRFRSLTHGAERASVAEIERNPRSTPVRLRALQRVEHRAQSQQWATEKGDS</sequence>
<organism>
    <name type="scientific">Mycobacterium bovis (strain BCG / Pasteur 1173P2)</name>
    <dbReference type="NCBI Taxonomy" id="410289"/>
    <lineage>
        <taxon>Bacteria</taxon>
        <taxon>Bacillati</taxon>
        <taxon>Actinomycetota</taxon>
        <taxon>Actinomycetes</taxon>
        <taxon>Mycobacteriales</taxon>
        <taxon>Mycobacteriaceae</taxon>
        <taxon>Mycobacterium</taxon>
        <taxon>Mycobacterium tuberculosis complex</taxon>
    </lineage>
</organism>
<dbReference type="EC" id="2.1.1.199" evidence="1"/>
<dbReference type="EMBL" id="AM408590">
    <property type="protein sequence ID" value="CAL72170.1"/>
    <property type="molecule type" value="Genomic_DNA"/>
</dbReference>
<dbReference type="RefSeq" id="WP_003411221.1">
    <property type="nucleotide sequence ID" value="NC_008769.1"/>
</dbReference>
<dbReference type="SMR" id="A1KKK8"/>
<dbReference type="KEGG" id="mbb:BCG_2182c"/>
<dbReference type="HOGENOM" id="CLU_038422_0_0_11"/>
<dbReference type="Proteomes" id="UP000001472">
    <property type="component" value="Chromosome"/>
</dbReference>
<dbReference type="GO" id="GO:0005737">
    <property type="term" value="C:cytoplasm"/>
    <property type="evidence" value="ECO:0007669"/>
    <property type="project" value="UniProtKB-SubCell"/>
</dbReference>
<dbReference type="GO" id="GO:0071424">
    <property type="term" value="F:rRNA (cytosine-N4-)-methyltransferase activity"/>
    <property type="evidence" value="ECO:0007669"/>
    <property type="project" value="UniProtKB-UniRule"/>
</dbReference>
<dbReference type="GO" id="GO:0070475">
    <property type="term" value="P:rRNA base methylation"/>
    <property type="evidence" value="ECO:0007669"/>
    <property type="project" value="UniProtKB-UniRule"/>
</dbReference>
<dbReference type="FunFam" id="1.10.150.170:FF:000001">
    <property type="entry name" value="Ribosomal RNA small subunit methyltransferase H"/>
    <property type="match status" value="1"/>
</dbReference>
<dbReference type="Gene3D" id="1.10.150.170">
    <property type="entry name" value="Putative methyltransferase TM0872, insert domain"/>
    <property type="match status" value="1"/>
</dbReference>
<dbReference type="Gene3D" id="3.40.50.150">
    <property type="entry name" value="Vaccinia Virus protein VP39"/>
    <property type="match status" value="1"/>
</dbReference>
<dbReference type="HAMAP" id="MF_01007">
    <property type="entry name" value="16SrRNA_methyltr_H"/>
    <property type="match status" value="1"/>
</dbReference>
<dbReference type="InterPro" id="IPR002903">
    <property type="entry name" value="RsmH"/>
</dbReference>
<dbReference type="InterPro" id="IPR023397">
    <property type="entry name" value="SAM-dep_MeTrfase_MraW_recog"/>
</dbReference>
<dbReference type="InterPro" id="IPR029063">
    <property type="entry name" value="SAM-dependent_MTases_sf"/>
</dbReference>
<dbReference type="NCBIfam" id="TIGR00006">
    <property type="entry name" value="16S rRNA (cytosine(1402)-N(4))-methyltransferase RsmH"/>
    <property type="match status" value="1"/>
</dbReference>
<dbReference type="PANTHER" id="PTHR11265:SF0">
    <property type="entry name" value="12S RRNA N4-METHYLCYTIDINE METHYLTRANSFERASE"/>
    <property type="match status" value="1"/>
</dbReference>
<dbReference type="PANTHER" id="PTHR11265">
    <property type="entry name" value="S-ADENOSYL-METHYLTRANSFERASE MRAW"/>
    <property type="match status" value="1"/>
</dbReference>
<dbReference type="Pfam" id="PF01795">
    <property type="entry name" value="Methyltransf_5"/>
    <property type="match status" value="1"/>
</dbReference>
<dbReference type="SUPFAM" id="SSF81799">
    <property type="entry name" value="Putative methyltransferase TM0872, insert domain"/>
    <property type="match status" value="1"/>
</dbReference>
<dbReference type="SUPFAM" id="SSF53335">
    <property type="entry name" value="S-adenosyl-L-methionine-dependent methyltransferases"/>
    <property type="match status" value="1"/>
</dbReference>
<name>RSMH_MYCBP</name>
<keyword id="KW-0963">Cytoplasm</keyword>
<keyword id="KW-0489">Methyltransferase</keyword>
<keyword id="KW-0698">rRNA processing</keyword>
<keyword id="KW-0949">S-adenosyl-L-methionine</keyword>
<keyword id="KW-0808">Transferase</keyword>